<evidence type="ECO:0000255" key="1">
    <source>
        <dbReference type="HAMAP-Rule" id="MF_01710"/>
    </source>
</evidence>
<name>ECFA2_STRPQ</name>
<sequence>MSINLQNVSYTYQVGTPFEGRALFNINLDILDGSYTAFIGHTGSGKSTIMQLLNGLHVPTTGIVSVDKQDITNHSKNKEIKSIRKHVGLVFQFPESQLFEETVLKDVAFGPQNFGISPEEAEALAREKLALVGISENLFEKNPFELSGGQMRRVAIAGILAMQPKVLVLDEPTAGLDPKGRKELMTIFKKLHQSGMTIVLVTHLMDDVANYADFVYVLDKGKIILSGKPKTIFQQVSLLEKKQLGVPKVTKLAQRLVDRGIPISSLPITLEELREVLKHG</sequence>
<proteinExistence type="inferred from homology"/>
<gene>
    <name evidence="1" type="primary">ecfA2</name>
    <name type="synonym">cbiO2</name>
    <name type="ordered locus">SPs1841</name>
</gene>
<accession>P0CZ27</accession>
<accession>Q79VY7</accession>
<accession>Q8K5H2</accession>
<comment type="function">
    <text evidence="1">ATP-binding (A) component of a common energy-coupling factor (ECF) ABC-transporter complex. Unlike classic ABC transporters this ECF transporter provides the energy necessary to transport a number of different substrates.</text>
</comment>
<comment type="subunit">
    <text evidence="1">Forms a stable energy-coupling factor (ECF) transporter complex composed of 2 membrane-embedded substrate-binding proteins (S component), 2 ATP-binding proteins (A component) and 2 transmembrane proteins (T component).</text>
</comment>
<comment type="subcellular location">
    <subcellularLocation>
        <location evidence="1">Cell membrane</location>
        <topology evidence="1">Peripheral membrane protein</topology>
    </subcellularLocation>
</comment>
<comment type="similarity">
    <text evidence="1">Belongs to the ABC transporter superfamily. Energy-coupling factor EcfA family.</text>
</comment>
<protein>
    <recommendedName>
        <fullName evidence="1">Energy-coupling factor transporter ATP-binding protein EcfA2</fullName>
        <shortName evidence="1">ECF transporter A component EcfA2</shortName>
        <ecNumber evidence="1">7.-.-.-</ecNumber>
    </recommendedName>
</protein>
<reference key="1">
    <citation type="journal article" date="2003" name="Genome Res.">
        <title>Genome sequence of an M3 strain of Streptococcus pyogenes reveals a large-scale genomic rearrangement in invasive strains and new insights into phage evolution.</title>
        <authorList>
            <person name="Nakagawa I."/>
            <person name="Kurokawa K."/>
            <person name="Yamashita A."/>
            <person name="Nakata M."/>
            <person name="Tomiyasu Y."/>
            <person name="Okahashi N."/>
            <person name="Kawabata S."/>
            <person name="Yamazaki K."/>
            <person name="Shiba T."/>
            <person name="Yasunaga T."/>
            <person name="Hayashi H."/>
            <person name="Hattori M."/>
            <person name="Hamada S."/>
        </authorList>
    </citation>
    <scope>NUCLEOTIDE SEQUENCE [LARGE SCALE GENOMIC DNA]</scope>
    <source>
        <strain>SSI-1</strain>
    </source>
</reference>
<organism>
    <name type="scientific">Streptococcus pyogenes serotype M3 (strain SSI-1)</name>
    <dbReference type="NCBI Taxonomy" id="193567"/>
    <lineage>
        <taxon>Bacteria</taxon>
        <taxon>Bacillati</taxon>
        <taxon>Bacillota</taxon>
        <taxon>Bacilli</taxon>
        <taxon>Lactobacillales</taxon>
        <taxon>Streptococcaceae</taxon>
        <taxon>Streptococcus</taxon>
    </lineage>
</organism>
<feature type="chain" id="PRO_0000411251" description="Energy-coupling factor transporter ATP-binding protein EcfA2">
    <location>
        <begin position="1"/>
        <end position="280"/>
    </location>
</feature>
<feature type="domain" description="ABC transporter" evidence="1">
    <location>
        <begin position="3"/>
        <end position="245"/>
    </location>
</feature>
<feature type="binding site" evidence="1">
    <location>
        <begin position="40"/>
        <end position="47"/>
    </location>
    <ligand>
        <name>ATP</name>
        <dbReference type="ChEBI" id="CHEBI:30616"/>
    </ligand>
</feature>
<keyword id="KW-0067">ATP-binding</keyword>
<keyword id="KW-1003">Cell membrane</keyword>
<keyword id="KW-0472">Membrane</keyword>
<keyword id="KW-0547">Nucleotide-binding</keyword>
<keyword id="KW-1278">Translocase</keyword>
<keyword id="KW-0813">Transport</keyword>
<dbReference type="EC" id="7.-.-.-" evidence="1"/>
<dbReference type="EMBL" id="BA000034">
    <property type="protein sequence ID" value="BAC64936.1"/>
    <property type="molecule type" value="Genomic_DNA"/>
</dbReference>
<dbReference type="RefSeq" id="WP_011055109.1">
    <property type="nucleotide sequence ID" value="NC_004606.1"/>
</dbReference>
<dbReference type="SMR" id="P0CZ27"/>
<dbReference type="KEGG" id="sps:SPs1841"/>
<dbReference type="HOGENOM" id="CLU_000604_1_22_9"/>
<dbReference type="GO" id="GO:0043190">
    <property type="term" value="C:ATP-binding cassette (ABC) transporter complex"/>
    <property type="evidence" value="ECO:0007669"/>
    <property type="project" value="TreeGrafter"/>
</dbReference>
<dbReference type="GO" id="GO:0005524">
    <property type="term" value="F:ATP binding"/>
    <property type="evidence" value="ECO:0007669"/>
    <property type="project" value="UniProtKB-KW"/>
</dbReference>
<dbReference type="GO" id="GO:0016887">
    <property type="term" value="F:ATP hydrolysis activity"/>
    <property type="evidence" value="ECO:0007669"/>
    <property type="project" value="InterPro"/>
</dbReference>
<dbReference type="GO" id="GO:0042626">
    <property type="term" value="F:ATPase-coupled transmembrane transporter activity"/>
    <property type="evidence" value="ECO:0007669"/>
    <property type="project" value="TreeGrafter"/>
</dbReference>
<dbReference type="CDD" id="cd03225">
    <property type="entry name" value="ABC_cobalt_CbiO_domain1"/>
    <property type="match status" value="1"/>
</dbReference>
<dbReference type="FunFam" id="3.40.50.300:FF:000224">
    <property type="entry name" value="Energy-coupling factor transporter ATP-binding protein EcfA"/>
    <property type="match status" value="1"/>
</dbReference>
<dbReference type="Gene3D" id="3.40.50.300">
    <property type="entry name" value="P-loop containing nucleotide triphosphate hydrolases"/>
    <property type="match status" value="1"/>
</dbReference>
<dbReference type="InterPro" id="IPR003593">
    <property type="entry name" value="AAA+_ATPase"/>
</dbReference>
<dbReference type="InterPro" id="IPR003439">
    <property type="entry name" value="ABC_transporter-like_ATP-bd"/>
</dbReference>
<dbReference type="InterPro" id="IPR017871">
    <property type="entry name" value="ABC_transporter-like_CS"/>
</dbReference>
<dbReference type="InterPro" id="IPR015856">
    <property type="entry name" value="ABC_transpr_CbiO/EcfA_su"/>
</dbReference>
<dbReference type="InterPro" id="IPR050095">
    <property type="entry name" value="ECF_ABC_transporter_ATP-bd"/>
</dbReference>
<dbReference type="InterPro" id="IPR030946">
    <property type="entry name" value="EcfA2"/>
</dbReference>
<dbReference type="InterPro" id="IPR027417">
    <property type="entry name" value="P-loop_NTPase"/>
</dbReference>
<dbReference type="NCBIfam" id="TIGR04521">
    <property type="entry name" value="ECF_ATPase_2"/>
    <property type="match status" value="1"/>
</dbReference>
<dbReference type="PANTHER" id="PTHR43553:SF27">
    <property type="entry name" value="ENERGY-COUPLING FACTOR TRANSPORTER ATP-BINDING PROTEIN ECFA2"/>
    <property type="match status" value="1"/>
</dbReference>
<dbReference type="PANTHER" id="PTHR43553">
    <property type="entry name" value="HEAVY METAL TRANSPORTER"/>
    <property type="match status" value="1"/>
</dbReference>
<dbReference type="Pfam" id="PF00005">
    <property type="entry name" value="ABC_tran"/>
    <property type="match status" value="1"/>
</dbReference>
<dbReference type="SMART" id="SM00382">
    <property type="entry name" value="AAA"/>
    <property type="match status" value="1"/>
</dbReference>
<dbReference type="SUPFAM" id="SSF52540">
    <property type="entry name" value="P-loop containing nucleoside triphosphate hydrolases"/>
    <property type="match status" value="1"/>
</dbReference>
<dbReference type="PROSITE" id="PS00211">
    <property type="entry name" value="ABC_TRANSPORTER_1"/>
    <property type="match status" value="1"/>
</dbReference>
<dbReference type="PROSITE" id="PS50893">
    <property type="entry name" value="ABC_TRANSPORTER_2"/>
    <property type="match status" value="1"/>
</dbReference>
<dbReference type="PROSITE" id="PS51246">
    <property type="entry name" value="CBIO"/>
    <property type="match status" value="1"/>
</dbReference>